<proteinExistence type="evidence at protein level"/>
<feature type="signal peptide" evidence="1">
    <location>
        <begin position="1"/>
        <end position="23"/>
    </location>
</feature>
<feature type="chain" id="PRO_0000013915" description="Lipopolysaccharide export system protein LptA">
    <location>
        <begin position="24"/>
        <end position="172"/>
    </location>
</feature>
<sequence length="172" mass="18700">MKLVSNKILFLATMVLASSSAFALKDDVNQPINIVSDNQSLDMEKSVVTFTDNVVITQGSIVIKANKVVITRPAEKSGKKETVEAFGTPVTFHQQLDNGKPVDGKANKVHYDLGNEFLTLTNNAELKQLDSKINGSVITYDVKKQQLKANGNGKSRVTTVLIPSQLQQAKGK</sequence>
<reference key="1">
    <citation type="journal article" date="1995" name="Science">
        <title>Whole-genome random sequencing and assembly of Haemophilus influenzae Rd.</title>
        <authorList>
            <person name="Fleischmann R.D."/>
            <person name="Adams M.D."/>
            <person name="White O."/>
            <person name="Clayton R.A."/>
            <person name="Kirkness E.F."/>
            <person name="Kerlavage A.R."/>
            <person name="Bult C.J."/>
            <person name="Tomb J.-F."/>
            <person name="Dougherty B.A."/>
            <person name="Merrick J.M."/>
            <person name="McKenney K."/>
            <person name="Sutton G.G."/>
            <person name="FitzHugh W."/>
            <person name="Fields C.A."/>
            <person name="Gocayne J.D."/>
            <person name="Scott J.D."/>
            <person name="Shirley R."/>
            <person name="Liu L.-I."/>
            <person name="Glodek A."/>
            <person name="Kelley J.M."/>
            <person name="Weidman J.F."/>
            <person name="Phillips C.A."/>
            <person name="Spriggs T."/>
            <person name="Hedblom E."/>
            <person name="Cotton M.D."/>
            <person name="Utterback T.R."/>
            <person name="Hanna M.C."/>
            <person name="Nguyen D.T."/>
            <person name="Saudek D.M."/>
            <person name="Brandon R.C."/>
            <person name="Fine L.D."/>
            <person name="Fritchman J.L."/>
            <person name="Fuhrmann J.L."/>
            <person name="Geoghagen N.S.M."/>
            <person name="Gnehm C.L."/>
            <person name="McDonald L.A."/>
            <person name="Small K.V."/>
            <person name="Fraser C.M."/>
            <person name="Smith H.O."/>
            <person name="Venter J.C."/>
        </authorList>
    </citation>
    <scope>NUCLEOTIDE SEQUENCE [LARGE SCALE GENOMIC DNA]</scope>
    <source>
        <strain>ATCC 51907 / DSM 11121 / KW20 / Rd</strain>
    </source>
</reference>
<reference key="2">
    <citation type="journal article" date="2000" name="Electrophoresis">
        <title>Two-dimensional map of the proteome of Haemophilus influenzae.</title>
        <authorList>
            <person name="Langen H."/>
            <person name="Takacs B."/>
            <person name="Evers S."/>
            <person name="Berndt P."/>
            <person name="Lahm H.W."/>
            <person name="Wipf B."/>
            <person name="Gray C."/>
            <person name="Fountoulakis M."/>
        </authorList>
    </citation>
    <scope>IDENTIFICATION BY MASS SPECTROMETRY</scope>
    <source>
        <strain>ATCC 51907 / DSM 11121 / KW20 / Rd</strain>
    </source>
</reference>
<dbReference type="EMBL" id="L42023">
    <property type="protein sequence ID" value="AAC22804.1"/>
    <property type="status" value="ALT_INIT"/>
    <property type="molecule type" value="Genomic_DNA"/>
</dbReference>
<dbReference type="PIR" id="A64168">
    <property type="entry name" value="A64168"/>
</dbReference>
<dbReference type="RefSeq" id="NP_439307.1">
    <property type="nucleotide sequence ID" value="NC_000907.1"/>
</dbReference>
<dbReference type="SMR" id="P45074"/>
<dbReference type="STRING" id="71421.HI_1149"/>
<dbReference type="EnsemblBacteria" id="AAC22804">
    <property type="protein sequence ID" value="AAC22804"/>
    <property type="gene ID" value="HI_1149"/>
</dbReference>
<dbReference type="KEGG" id="hin:HI_1149"/>
<dbReference type="PATRIC" id="fig|71421.8.peg.1199"/>
<dbReference type="eggNOG" id="COG1934">
    <property type="taxonomic scope" value="Bacteria"/>
</dbReference>
<dbReference type="HOGENOM" id="CLU_095993_2_0_6"/>
<dbReference type="OrthoDB" id="5295619at2"/>
<dbReference type="PhylomeDB" id="P45074"/>
<dbReference type="BioCyc" id="HINF71421:G1GJ1-1182-MONOMER"/>
<dbReference type="Proteomes" id="UP000000579">
    <property type="component" value="Chromosome"/>
</dbReference>
<dbReference type="GO" id="GO:0009279">
    <property type="term" value="C:cell outer membrane"/>
    <property type="evidence" value="ECO:0000318"/>
    <property type="project" value="GO_Central"/>
</dbReference>
<dbReference type="GO" id="GO:0030288">
    <property type="term" value="C:outer membrane-bounded periplasmic space"/>
    <property type="evidence" value="ECO:0000318"/>
    <property type="project" value="GO_Central"/>
</dbReference>
<dbReference type="GO" id="GO:0017089">
    <property type="term" value="F:glycolipid transfer activity"/>
    <property type="evidence" value="ECO:0000318"/>
    <property type="project" value="GO_Central"/>
</dbReference>
<dbReference type="GO" id="GO:0001530">
    <property type="term" value="F:lipopolysaccharide binding"/>
    <property type="evidence" value="ECO:0007669"/>
    <property type="project" value="InterPro"/>
</dbReference>
<dbReference type="GO" id="GO:0043165">
    <property type="term" value="P:Gram-negative-bacterium-type cell outer membrane assembly"/>
    <property type="evidence" value="ECO:0007669"/>
    <property type="project" value="UniProtKB-UniRule"/>
</dbReference>
<dbReference type="GO" id="GO:0015920">
    <property type="term" value="P:lipopolysaccharide transport"/>
    <property type="evidence" value="ECO:0000318"/>
    <property type="project" value="GO_Central"/>
</dbReference>
<dbReference type="FunFam" id="2.60.450.10:FF:000002">
    <property type="entry name" value="Lipopolysaccharide export system protein LptA"/>
    <property type="match status" value="1"/>
</dbReference>
<dbReference type="Gene3D" id="2.60.450.10">
    <property type="entry name" value="Lipopolysaccharide (LPS) transport protein A like domain"/>
    <property type="match status" value="1"/>
</dbReference>
<dbReference type="HAMAP" id="MF_01914">
    <property type="entry name" value="LPS_assembly_LptA"/>
    <property type="match status" value="1"/>
</dbReference>
<dbReference type="InterPro" id="IPR052037">
    <property type="entry name" value="LPS_export_LptA"/>
</dbReference>
<dbReference type="InterPro" id="IPR014340">
    <property type="entry name" value="LptA"/>
</dbReference>
<dbReference type="InterPro" id="IPR005653">
    <property type="entry name" value="OstA-like_N"/>
</dbReference>
<dbReference type="NCBIfam" id="TIGR03002">
    <property type="entry name" value="outer_YhbN_LptA"/>
    <property type="match status" value="1"/>
</dbReference>
<dbReference type="PANTHER" id="PTHR36504">
    <property type="entry name" value="LIPOPOLYSACCHARIDE EXPORT SYSTEM PROTEIN LPTA"/>
    <property type="match status" value="1"/>
</dbReference>
<dbReference type="PANTHER" id="PTHR36504:SF1">
    <property type="entry name" value="LIPOPOLYSACCHARIDE EXPORT SYSTEM PROTEIN LPTA"/>
    <property type="match status" value="1"/>
</dbReference>
<dbReference type="Pfam" id="PF03968">
    <property type="entry name" value="LptD_N"/>
    <property type="match status" value="1"/>
</dbReference>
<gene>
    <name evidence="1" type="primary">lptA</name>
    <name type="ordered locus">HI_1149</name>
</gene>
<keyword id="KW-0574">Periplasm</keyword>
<keyword id="KW-1185">Reference proteome</keyword>
<keyword id="KW-0732">Signal</keyword>
<keyword id="KW-0813">Transport</keyword>
<accession>P45074</accession>
<comment type="function">
    <text evidence="1">Involved in the assembly of lipopolysaccharide (LPS). Required for the translocation of LPS from the inner membrane to the outer membrane. May form a bridge between the inner membrane and the outer membrane, via interactions with LptC and LptD, thereby facilitating LPS transfer across the periplasm.</text>
</comment>
<comment type="subunit">
    <text evidence="1">Component of the lipopolysaccharide transport and assembly complex.</text>
</comment>
<comment type="subcellular location">
    <subcellularLocation>
        <location evidence="1">Periplasm</location>
    </subcellularLocation>
</comment>
<comment type="similarity">
    <text evidence="1">Belongs to the LptA family.</text>
</comment>
<comment type="sequence caution" evidence="2">
    <conflict type="erroneous initiation">
        <sequence resource="EMBL-CDS" id="AAC22804"/>
    </conflict>
    <text>Truncated N-terminus.</text>
</comment>
<name>LPTA_HAEIN</name>
<protein>
    <recommendedName>
        <fullName evidence="1">Lipopolysaccharide export system protein LptA</fullName>
    </recommendedName>
</protein>
<organism>
    <name type="scientific">Haemophilus influenzae (strain ATCC 51907 / DSM 11121 / KW20 / Rd)</name>
    <dbReference type="NCBI Taxonomy" id="71421"/>
    <lineage>
        <taxon>Bacteria</taxon>
        <taxon>Pseudomonadati</taxon>
        <taxon>Pseudomonadota</taxon>
        <taxon>Gammaproteobacteria</taxon>
        <taxon>Pasteurellales</taxon>
        <taxon>Pasteurellaceae</taxon>
        <taxon>Haemophilus</taxon>
    </lineage>
</organism>
<evidence type="ECO:0000255" key="1">
    <source>
        <dbReference type="HAMAP-Rule" id="MF_01914"/>
    </source>
</evidence>
<evidence type="ECO:0000305" key="2"/>